<proteinExistence type="inferred from homology"/>
<organism>
    <name type="scientific">Rickettsia rickettsii (strain Iowa)</name>
    <dbReference type="NCBI Taxonomy" id="452659"/>
    <lineage>
        <taxon>Bacteria</taxon>
        <taxon>Pseudomonadati</taxon>
        <taxon>Pseudomonadota</taxon>
        <taxon>Alphaproteobacteria</taxon>
        <taxon>Rickettsiales</taxon>
        <taxon>Rickettsiaceae</taxon>
        <taxon>Rickettsieae</taxon>
        <taxon>Rickettsia</taxon>
        <taxon>spotted fever group</taxon>
    </lineage>
</organism>
<accession>B0BUP5</accession>
<sequence length="177" mass="19580">MSRVGKLPITIPEGVKIGLNDLEVKISGPKGELSKTFKGNIAISLAENKLLVKPLAAKKNARAMWGTARSIISNMVTGVKEGFKLKLEINGVGYRAMVKGKYLNLMLAKSHNTKIEIPSDIKIEMPKQNIIILEGTDKEKLGQFASIIIKQRPPEPYKGKGIKFENQFIPRKEGKKN</sequence>
<reference key="1">
    <citation type="journal article" date="2008" name="Infect. Immun.">
        <title>Genomic comparison of virulent Rickettsia rickettsii Sheila Smith and avirulent Rickettsia rickettsii Iowa.</title>
        <authorList>
            <person name="Ellison D.W."/>
            <person name="Clark T.R."/>
            <person name="Sturdevant D.E."/>
            <person name="Virtaneva K."/>
            <person name="Porcella S.F."/>
            <person name="Hackstadt T."/>
        </authorList>
    </citation>
    <scope>NUCLEOTIDE SEQUENCE [LARGE SCALE GENOMIC DNA]</scope>
    <source>
        <strain>Iowa</strain>
    </source>
</reference>
<gene>
    <name evidence="1" type="primary">rplF</name>
    <name type="ordered locus">RrIowa_1182</name>
</gene>
<name>RL6_RICRO</name>
<comment type="function">
    <text evidence="1">This protein binds to the 23S rRNA, and is important in its secondary structure. It is located near the subunit interface in the base of the L7/L12 stalk, and near the tRNA binding site of the peptidyltransferase center.</text>
</comment>
<comment type="subunit">
    <text evidence="1">Part of the 50S ribosomal subunit.</text>
</comment>
<comment type="similarity">
    <text evidence="1">Belongs to the universal ribosomal protein uL6 family.</text>
</comment>
<evidence type="ECO:0000255" key="1">
    <source>
        <dbReference type="HAMAP-Rule" id="MF_01365"/>
    </source>
</evidence>
<evidence type="ECO:0000305" key="2"/>
<dbReference type="EMBL" id="CP000766">
    <property type="protein sequence ID" value="ABY72955.1"/>
    <property type="molecule type" value="Genomic_DNA"/>
</dbReference>
<dbReference type="RefSeq" id="WP_012151142.1">
    <property type="nucleotide sequence ID" value="NC_010263.3"/>
</dbReference>
<dbReference type="SMR" id="B0BUP5"/>
<dbReference type="GeneID" id="79937655"/>
<dbReference type="KEGG" id="rrj:RrIowa_1182"/>
<dbReference type="eggNOG" id="COG0097">
    <property type="taxonomic scope" value="Bacteria"/>
</dbReference>
<dbReference type="HOGENOM" id="CLU_065464_1_2_5"/>
<dbReference type="Proteomes" id="UP000000796">
    <property type="component" value="Chromosome"/>
</dbReference>
<dbReference type="GO" id="GO:1990904">
    <property type="term" value="C:ribonucleoprotein complex"/>
    <property type="evidence" value="ECO:0007669"/>
    <property type="project" value="UniProtKB-KW"/>
</dbReference>
<dbReference type="GO" id="GO:0005840">
    <property type="term" value="C:ribosome"/>
    <property type="evidence" value="ECO:0007669"/>
    <property type="project" value="UniProtKB-KW"/>
</dbReference>
<dbReference type="GO" id="GO:0019843">
    <property type="term" value="F:rRNA binding"/>
    <property type="evidence" value="ECO:0007669"/>
    <property type="project" value="UniProtKB-UniRule"/>
</dbReference>
<dbReference type="GO" id="GO:0003735">
    <property type="term" value="F:structural constituent of ribosome"/>
    <property type="evidence" value="ECO:0007669"/>
    <property type="project" value="InterPro"/>
</dbReference>
<dbReference type="GO" id="GO:0002181">
    <property type="term" value="P:cytoplasmic translation"/>
    <property type="evidence" value="ECO:0007669"/>
    <property type="project" value="TreeGrafter"/>
</dbReference>
<dbReference type="FunFam" id="3.90.930.12:FF:000002">
    <property type="entry name" value="50S ribosomal protein L6"/>
    <property type="match status" value="1"/>
</dbReference>
<dbReference type="Gene3D" id="3.90.930.12">
    <property type="entry name" value="Ribosomal protein L6, alpha-beta domain"/>
    <property type="match status" value="2"/>
</dbReference>
<dbReference type="HAMAP" id="MF_01365_B">
    <property type="entry name" value="Ribosomal_uL6_B"/>
    <property type="match status" value="1"/>
</dbReference>
<dbReference type="InterPro" id="IPR000702">
    <property type="entry name" value="Ribosomal_uL6-like"/>
</dbReference>
<dbReference type="InterPro" id="IPR036789">
    <property type="entry name" value="Ribosomal_uL6-like_a/b-dom_sf"/>
</dbReference>
<dbReference type="InterPro" id="IPR020040">
    <property type="entry name" value="Ribosomal_uL6_a/b-dom"/>
</dbReference>
<dbReference type="InterPro" id="IPR019906">
    <property type="entry name" value="Ribosomal_uL6_bac-type"/>
</dbReference>
<dbReference type="InterPro" id="IPR002358">
    <property type="entry name" value="Ribosomal_uL6_CS"/>
</dbReference>
<dbReference type="NCBIfam" id="TIGR03654">
    <property type="entry name" value="L6_bact"/>
    <property type="match status" value="1"/>
</dbReference>
<dbReference type="PANTHER" id="PTHR11655">
    <property type="entry name" value="60S/50S RIBOSOMAL PROTEIN L6/L9"/>
    <property type="match status" value="1"/>
</dbReference>
<dbReference type="PANTHER" id="PTHR11655:SF14">
    <property type="entry name" value="LARGE RIBOSOMAL SUBUNIT PROTEIN UL6M"/>
    <property type="match status" value="1"/>
</dbReference>
<dbReference type="Pfam" id="PF00347">
    <property type="entry name" value="Ribosomal_L6"/>
    <property type="match status" value="2"/>
</dbReference>
<dbReference type="PIRSF" id="PIRSF002162">
    <property type="entry name" value="Ribosomal_L6"/>
    <property type="match status" value="1"/>
</dbReference>
<dbReference type="PRINTS" id="PR00059">
    <property type="entry name" value="RIBOSOMALL6"/>
</dbReference>
<dbReference type="SUPFAM" id="SSF56053">
    <property type="entry name" value="Ribosomal protein L6"/>
    <property type="match status" value="2"/>
</dbReference>
<dbReference type="PROSITE" id="PS00525">
    <property type="entry name" value="RIBOSOMAL_L6_1"/>
    <property type="match status" value="1"/>
</dbReference>
<protein>
    <recommendedName>
        <fullName evidence="1">Large ribosomal subunit protein uL6</fullName>
    </recommendedName>
    <alternativeName>
        <fullName evidence="2">50S ribosomal protein L6</fullName>
    </alternativeName>
</protein>
<keyword id="KW-0687">Ribonucleoprotein</keyword>
<keyword id="KW-0689">Ribosomal protein</keyword>
<keyword id="KW-0694">RNA-binding</keyword>
<keyword id="KW-0699">rRNA-binding</keyword>
<feature type="chain" id="PRO_1000087058" description="Large ribosomal subunit protein uL6">
    <location>
        <begin position="1"/>
        <end position="177"/>
    </location>
</feature>